<dbReference type="EMBL" id="U40013">
    <property type="protein sequence ID" value="AAA86618.1"/>
    <property type="molecule type" value="Genomic_DNA"/>
</dbReference>
<dbReference type="EMBL" id="FQ312003">
    <property type="protein sequence ID" value="CBW18959.1"/>
    <property type="molecule type" value="Genomic_DNA"/>
</dbReference>
<dbReference type="EMBL" id="U30491">
    <property type="protein sequence ID" value="AAC43549.1"/>
    <property type="molecule type" value="Genomic_DNA"/>
</dbReference>
<dbReference type="PIR" id="S70550">
    <property type="entry name" value="S70550"/>
</dbReference>
<dbReference type="RefSeq" id="WP_000258811.1">
    <property type="nucleotide sequence ID" value="NZ_QASL01000017.1"/>
</dbReference>
<dbReference type="SMR" id="E1WAC6"/>
<dbReference type="KEGG" id="sey:SL1344_2861"/>
<dbReference type="PATRIC" id="fig|216597.6.peg.3183"/>
<dbReference type="HOGENOM" id="CLU_410980_0_0_6"/>
<dbReference type="BioCyc" id="SENT216597:SL1344_RS14920-MONOMER"/>
<dbReference type="Proteomes" id="UP000008962">
    <property type="component" value="Chromosome"/>
</dbReference>
<dbReference type="GO" id="GO:0005615">
    <property type="term" value="C:extracellular space"/>
    <property type="evidence" value="ECO:0000314"/>
    <property type="project" value="UniProtKB"/>
</dbReference>
<dbReference type="GO" id="GO:0003779">
    <property type="term" value="F:actin binding"/>
    <property type="evidence" value="ECO:0007669"/>
    <property type="project" value="UniProtKB-KW"/>
</dbReference>
<dbReference type="GO" id="GO:0090023">
    <property type="term" value="P:positive regulation of neutrophil chemotaxis"/>
    <property type="evidence" value="ECO:0000315"/>
    <property type="project" value="UniProtKB"/>
</dbReference>
<dbReference type="Gene3D" id="1.10.4110.10">
    <property type="entry name" value="Salmonella invasion protein A, C-terminal actin-binding domain"/>
    <property type="match status" value="1"/>
</dbReference>
<dbReference type="Gene3D" id="1.10.4150.10">
    <property type="entry name" value="SipA N-terminal domain-like"/>
    <property type="match status" value="1"/>
</dbReference>
<dbReference type="InterPro" id="IPR023224">
    <property type="entry name" value="SipA_actin-bd_C_sf"/>
</dbReference>
<dbReference type="InterPro" id="IPR054043">
    <property type="entry name" value="SipA_C"/>
</dbReference>
<dbReference type="InterPro" id="IPR023225">
    <property type="entry name" value="SipA_chaperone-bd"/>
</dbReference>
<dbReference type="InterPro" id="IPR015138">
    <property type="entry name" value="SipA_N"/>
</dbReference>
<dbReference type="NCBIfam" id="NF011903">
    <property type="entry name" value="PRK15376.1"/>
    <property type="match status" value="1"/>
</dbReference>
<dbReference type="Pfam" id="PF09052">
    <property type="entry name" value="SipA"/>
    <property type="match status" value="1"/>
</dbReference>
<dbReference type="Pfam" id="PF22163">
    <property type="entry name" value="SipA_2nd"/>
    <property type="match status" value="1"/>
</dbReference>
<dbReference type="SUPFAM" id="SSF101312">
    <property type="entry name" value="Invasion protein A (SipA) , C-terminal actin binding domain"/>
    <property type="match status" value="1"/>
</dbReference>
<dbReference type="SUPFAM" id="SSF140746">
    <property type="entry name" value="SipA N-terminal domain-like"/>
    <property type="match status" value="1"/>
</dbReference>
<protein>
    <recommendedName>
        <fullName>Cell invasion protein SipA</fullName>
    </recommendedName>
    <alternativeName>
        <fullName>Effector protein SipA</fullName>
    </alternativeName>
</protein>
<feature type="chain" id="PRO_0000406088" description="Cell invasion protein SipA">
    <location>
        <begin position="1"/>
        <end position="685"/>
    </location>
</feature>
<feature type="region of interest" description="Disordered" evidence="1">
    <location>
        <begin position="265"/>
        <end position="386"/>
    </location>
</feature>
<feature type="region of interest" description="Disordered" evidence="1">
    <location>
        <begin position="404"/>
        <end position="432"/>
    </location>
</feature>
<feature type="region of interest" description="Disordered" evidence="1">
    <location>
        <begin position="494"/>
        <end position="514"/>
    </location>
</feature>
<feature type="region of interest" description="Actin-binding and polymerization">
    <location>
        <begin position="497"/>
        <end position="669"/>
    </location>
</feature>
<feature type="compositionally biased region" description="Low complexity" evidence="1">
    <location>
        <begin position="291"/>
        <end position="304"/>
    </location>
</feature>
<feature type="compositionally biased region" description="Basic and acidic residues" evidence="1">
    <location>
        <begin position="315"/>
        <end position="337"/>
    </location>
</feature>
<feature type="compositionally biased region" description="Polar residues" evidence="1">
    <location>
        <begin position="338"/>
        <end position="349"/>
    </location>
</feature>
<feature type="compositionally biased region" description="Polar residues" evidence="1">
    <location>
        <begin position="369"/>
        <end position="383"/>
    </location>
</feature>
<feature type="compositionally biased region" description="Low complexity" evidence="1">
    <location>
        <begin position="417"/>
        <end position="429"/>
    </location>
</feature>
<feature type="compositionally biased region" description="Polar residues" evidence="1">
    <location>
        <begin position="494"/>
        <end position="511"/>
    </location>
</feature>
<feature type="sequence conflict" description="In Ref. 1; AAA86618." evidence="5" ref="1">
    <original>ESATATLSG</original>
    <variation>AKCHSDAVR</variation>
    <location>
        <begin position="36"/>
        <end position="44"/>
    </location>
</feature>
<feature type="sequence conflict" description="In Ref. 1; AAA86618." evidence="5" ref="1">
    <original>T</original>
    <variation>A</variation>
    <location>
        <position position="124"/>
    </location>
</feature>
<feature type="sequence conflict" description="In Ref. 1; AAA86618." evidence="5" ref="1">
    <original>H</original>
    <variation>P</variation>
    <location>
        <position position="226"/>
    </location>
</feature>
<feature type="sequence conflict" description="In Ref. 1; AAA86618." evidence="5" ref="1">
    <original>SRSH</original>
    <variation>AEP</variation>
    <location>
        <begin position="313"/>
        <end position="316"/>
    </location>
</feature>
<feature type="sequence conflict" description="In Ref. 1; AAA86618." evidence="5" ref="1">
    <original>S</original>
    <variation>G</variation>
    <location>
        <position position="320"/>
    </location>
</feature>
<sequence>MVTSVRTQPPVIMPGMQTEIKTQATNLAANLSAVRESATATLSGEIKGPQLEDFPALIKQASLDALFKCGKDAEALKEVFTNSNNVAGKKAIMEFAGLFRSALNATSDSPEAKTLLMKVGAEYTAQIIKDGLKEKSAFGPWLPETKKAEAKLENLEKQLLDIIKNNTGGELSKLSTNLVMQEVMPYIASCIEHNFGCTLDPLTRSNLTHLVDKAAAKAVEALDMCHQKLTQEQGTSVGREARHLEMQTLIPLLLRNVFAQIPADKLPDPKIPEPAAGPVPDGGKKAEPTGINININIDSSNHSVDNSKHINNSRSHVDNSQRHIDNSNHDNSRKTIDNSRTFIDNSQRNGESHHSTNSSNVSHSHSRVDSTTHQTETAHSASTGAIDHGIAGKIDVTAHATAEAVTNASSESKDGKVVTSEKGTTGETTSFDEVDGVTSKSIIGKPVQATVHGVDDNKQQSQTAEIVNVKPLASQLAGVENVKTDTLQSDTTVITGNKAGTTDNDNSQTDKTGPFSGLKFKQNSFLSTVPSVTNMHSMHFDARETFLGVIRKALEPDTSTPFPVRRAFDGLRAEILPNDTIKSAALKAQCSDIDKHPELKAKMETLKEVITHHPQKEKLAEIALQFAREAGLTRLKGETDYVLSNVLDGLIGDGSWRAGPAYESYLNKPGVDRVITTVDGLHMQR</sequence>
<name>SIPA_SALTS</name>
<gene>
    <name type="primary">sipA</name>
    <name type="synonym">sspA</name>
    <name type="ordered locus">SL1344_2861</name>
</gene>
<accession>E1WAC6</accession>
<accession>Q56027</accession>
<accession>Q56034</accession>
<accession>Q8ZMH9</accession>
<keyword id="KW-0009">Actin-binding</keyword>
<keyword id="KW-0964">Secreted</keyword>
<keyword id="KW-0843">Virulence</keyword>
<comment type="function">
    <text evidence="2 3">Actin-binding protein that interferes with host cell actin cytoskeleton. It stimulates actin polymerization and counteracts F-actin destabilizing proteins. Potentiates SipC activity; both are required for an efficient bacterial internalization. In vitro, forms a complex with host cell protein T-plastin increasing actin bundling. It inhibits ADF/cofilin-directed depolymerization both by preventing binding of ADF and cofilin and by displacing them from F-actin. Also protects F-actin from gelsolin-directed severing and reanneals gelsolin-severed F-actin fragments. Promotes human PERP relocalization to punctate structures throughout the host epithelial cell cytoplasm (PubMed:25486861). Promotes localization of human PERP to the apical cell surface of mucosal epithelial cells during infection, may thereby promote host neutrophil transepithelial migration (PubMed:25486861).</text>
</comment>
<comment type="subunit">
    <text evidence="3">Interacts with human PERP.</text>
</comment>
<comment type="subcellular location">
    <subcellularLocation>
        <location evidence="3 4">Secreted</location>
    </subcellularLocation>
    <text>Secreted via the type III secretion system 1 (SPI-1 T3SS).</text>
</comment>
<comment type="similarity">
    <text evidence="5">Belongs to the SipA/IpaA family.</text>
</comment>
<evidence type="ECO:0000256" key="1">
    <source>
        <dbReference type="SAM" id="MobiDB-lite"/>
    </source>
</evidence>
<evidence type="ECO:0000269" key="2">
    <source>
    </source>
</evidence>
<evidence type="ECO:0000269" key="3">
    <source>
    </source>
</evidence>
<evidence type="ECO:0000269" key="4">
    <source>
    </source>
</evidence>
<evidence type="ECO:0000305" key="5"/>
<organism>
    <name type="scientific">Salmonella typhimurium (strain SL1344)</name>
    <dbReference type="NCBI Taxonomy" id="216597"/>
    <lineage>
        <taxon>Bacteria</taxon>
        <taxon>Pseudomonadati</taxon>
        <taxon>Pseudomonadota</taxon>
        <taxon>Gammaproteobacteria</taxon>
        <taxon>Enterobacterales</taxon>
        <taxon>Enterobacteriaceae</taxon>
        <taxon>Salmonella</taxon>
    </lineage>
</organism>
<reference key="1">
    <citation type="journal article" date="1995" name="J. Bacteriol.">
        <title>Identification of two targets of the type III protein secretion system encoded by the inv and spa loci of Salmonella typhimurium that have homology to the Shigella IpaD and IpaA proteins.</title>
        <authorList>
            <person name="Kaniga K."/>
            <person name="Trollinger D."/>
            <person name="Galan J.E."/>
        </authorList>
    </citation>
    <scope>NUCLEOTIDE SEQUENCE [GENOMIC DNA]</scope>
    <scope>SUBCELLULAR LOCATION</scope>
    <source>
        <strain>SL1344</strain>
    </source>
</reference>
<reference key="2">
    <citation type="journal article" date="2012" name="Proc. Natl. Acad. Sci. U.S.A.">
        <title>The transcriptional landscape and small RNAs of Salmonella enterica serovar Typhimurium.</title>
        <authorList>
            <person name="Kroger C."/>
            <person name="Dillon S.C."/>
            <person name="Cameron A.D."/>
            <person name="Papenfort K."/>
            <person name="Sivasankaran S.K."/>
            <person name="Hokamp K."/>
            <person name="Chao Y."/>
            <person name="Sittka A."/>
            <person name="Hebrard M."/>
            <person name="Handler K."/>
            <person name="Colgan A."/>
            <person name="Leekitcharoenphon P."/>
            <person name="Langridge G.C."/>
            <person name="Lohan A.J."/>
            <person name="Loftus B."/>
            <person name="Lucchini S."/>
            <person name="Ussery D.W."/>
            <person name="Dorman C.J."/>
            <person name="Thomson N.R."/>
            <person name="Vogel J."/>
            <person name="Hinton J.C."/>
        </authorList>
    </citation>
    <scope>NUCLEOTIDE SEQUENCE [LARGE SCALE GENOMIC DNA]</scope>
    <source>
        <strain>SL1344</strain>
    </source>
</reference>
<reference key="3">
    <citation type="journal article" date="1995" name="Mol. Microbiol.">
        <title>Salmonella typhimurium secreted invasion determinants are homologous to Shigella Ipa proteins.</title>
        <authorList>
            <person name="Hueck C.J."/>
            <person name="Hantman M.J."/>
            <person name="Bajaj V."/>
            <person name="Johnston C."/>
            <person name="Lee C.A."/>
            <person name="Miller S.I."/>
        </authorList>
    </citation>
    <scope>NUCLEOTIDE SEQUENCE [GENOMIC DNA] OF 1-65</scope>
    <source>
        <strain>SL1344</strain>
    </source>
</reference>
<reference key="4">
    <citation type="journal article" date="1999" name="Science">
        <title>Role of the S. typhimurium actin-binding protein SipA in bacterial internalization.</title>
        <authorList>
            <person name="Zhou D."/>
            <person name="Mooseker M.S."/>
            <person name="Galan J.E."/>
        </authorList>
    </citation>
    <scope>FUNCTION</scope>
    <source>
        <strain>SL1344</strain>
    </source>
</reference>
<reference key="5">
    <citation type="journal article" date="1999" name="Proc. Natl. Acad. Sci. U.S.A.">
        <title>An invasion-associated Salmonella protein modulates the actin-bundling activity of plastin.</title>
        <authorList>
            <person name="Zhou D."/>
            <person name="Mooseker M.S."/>
            <person name="Galan J.E."/>
        </authorList>
    </citation>
    <scope>INTERACTION WITH HOST T-PLASTIN</scope>
    <source>
        <strain>SL1344</strain>
    </source>
</reference>
<reference key="6">
    <citation type="journal article" date="2015" name="Cell. Microbiol.">
        <title>PERP, a host tetraspanning membrane protein, is required for Salmonella-induced inflammation.</title>
        <authorList>
            <person name="Hallstrom K.N."/>
            <person name="Srikanth C.V."/>
            <person name="Agbor T.A."/>
            <person name="Dumont C.M."/>
            <person name="Peters K.N."/>
            <person name="Paraoan L."/>
            <person name="Casanova J.E."/>
            <person name="Boll E.J."/>
            <person name="McCormick B.A."/>
        </authorList>
    </citation>
    <scope>FUNCTION</scope>
    <scope>INTERACTION WITH HOST PERP</scope>
    <scope>SUBCELLULAR LOCATION</scope>
</reference>
<proteinExistence type="evidence at protein level"/>